<feature type="chain" id="PRO_0000177985" description="DNA mismatch repair protein MutL">
    <location>
        <begin position="1"/>
        <end position="510"/>
    </location>
</feature>
<accession>P74925</accession>
<accession>Q9S5W9</accession>
<comment type="function">
    <text evidence="1">This protein is involved in the repair of mismatches in DNA. It is required for dam-dependent methyl-directed DNA mismatch repair. May act as a 'molecular matchmaker', a protein that promotes the formation of a stable complex between two or more DNA-binding proteins in an ATP-dependent manner without itself being part of a final effector complex (By similarity).</text>
</comment>
<comment type="similarity">
    <text evidence="2">Belongs to the DNA mismatch repair MutL/HexB family.</text>
</comment>
<comment type="sequence caution" evidence="2">
    <conflict type="erroneous initiation">
        <sequence resource="EMBL-CDS" id="AAD35116"/>
    </conflict>
</comment>
<sequence>MRIKRLPESLVRKIAAGEVIHNPSFVLKELVENSLDAQADRIVVEIENGGKNMVRVSDNGIGMTREEALLAIEPYTTSKIESEEDLHRIRTYGFRGEALASIVQVSRAKIVTKTEKDALATQLMIAGGKVEEISETHRDTGTTVEVRDLFFNLPVRRKSLKSSAIELRMCREMFERFVLVRNDVDFVFTSDGKIVHSFPRTQNIFERALLILEDLRKGYITFEEELSGLRIKGIVSSREVTRSSRTGEYFYVNGRFVVSEELHEVLMKVYDLPKRSYPVAVLFIEVNPEELDVNIHPSKIVVKFLNEEKVKKSLEETLKRNLARKWYRSVAYEEISSRALSVAEAPSHRWFLVKGKYAVVEVEDGLLFVDLHALHERTIYEEILSKKSWGKRRVKRNITVVLSREEKQKLEEYGFSFQGEEGALKVIEIPEFLTEDVVEEFFRDFPVDEKLKERIALAACKLATKSGEFDEEIASKLLDVFFKKRFERCPHGRPISFKISYEDMDRFFER</sequence>
<dbReference type="EMBL" id="U71053">
    <property type="protein sequence ID" value="AAB09596.1"/>
    <property type="molecule type" value="Genomic_DNA"/>
</dbReference>
<dbReference type="EMBL" id="AE000512">
    <property type="protein sequence ID" value="AAD35116.1"/>
    <property type="status" value="ALT_INIT"/>
    <property type="molecule type" value="Genomic_DNA"/>
</dbReference>
<dbReference type="PIR" id="H72427">
    <property type="entry name" value="H72427"/>
</dbReference>
<dbReference type="RefSeq" id="NP_227838.1">
    <property type="nucleotide sequence ID" value="NC_000853.1"/>
</dbReference>
<dbReference type="RefSeq" id="WP_004082472.1">
    <property type="nucleotide sequence ID" value="NC_000853.1"/>
</dbReference>
<dbReference type="SMR" id="P74925"/>
<dbReference type="FunCoup" id="P74925">
    <property type="interactions" value="339"/>
</dbReference>
<dbReference type="STRING" id="243274.TM_0022"/>
<dbReference type="PaxDb" id="243274-THEMA_04690"/>
<dbReference type="EnsemblBacteria" id="AAD35116">
    <property type="protein sequence ID" value="AAD35116"/>
    <property type="gene ID" value="TM_0022"/>
</dbReference>
<dbReference type="KEGG" id="tma:TM0022"/>
<dbReference type="eggNOG" id="COG0323">
    <property type="taxonomic scope" value="Bacteria"/>
</dbReference>
<dbReference type="InParanoid" id="P74925"/>
<dbReference type="OrthoDB" id="9763467at2"/>
<dbReference type="Proteomes" id="UP000008183">
    <property type="component" value="Chromosome"/>
</dbReference>
<dbReference type="GO" id="GO:0032300">
    <property type="term" value="C:mismatch repair complex"/>
    <property type="evidence" value="ECO:0000318"/>
    <property type="project" value="GO_Central"/>
</dbReference>
<dbReference type="GO" id="GO:0005524">
    <property type="term" value="F:ATP binding"/>
    <property type="evidence" value="ECO:0007669"/>
    <property type="project" value="InterPro"/>
</dbReference>
<dbReference type="GO" id="GO:0016887">
    <property type="term" value="F:ATP hydrolysis activity"/>
    <property type="evidence" value="ECO:0000318"/>
    <property type="project" value="GO_Central"/>
</dbReference>
<dbReference type="GO" id="GO:0140664">
    <property type="term" value="F:ATP-dependent DNA damage sensor activity"/>
    <property type="evidence" value="ECO:0007669"/>
    <property type="project" value="InterPro"/>
</dbReference>
<dbReference type="GO" id="GO:0030983">
    <property type="term" value="F:mismatched DNA binding"/>
    <property type="evidence" value="ECO:0007669"/>
    <property type="project" value="InterPro"/>
</dbReference>
<dbReference type="GO" id="GO:0006298">
    <property type="term" value="P:mismatch repair"/>
    <property type="evidence" value="ECO:0000318"/>
    <property type="project" value="GO_Central"/>
</dbReference>
<dbReference type="CDD" id="cd16926">
    <property type="entry name" value="HATPase_MutL-MLH-PMS-like"/>
    <property type="match status" value="1"/>
</dbReference>
<dbReference type="CDD" id="cd00782">
    <property type="entry name" value="MutL_Trans"/>
    <property type="match status" value="1"/>
</dbReference>
<dbReference type="FunFam" id="3.30.565.10:FF:000003">
    <property type="entry name" value="DNA mismatch repair endonuclease MutL"/>
    <property type="match status" value="1"/>
</dbReference>
<dbReference type="Gene3D" id="3.30.230.10">
    <property type="match status" value="1"/>
</dbReference>
<dbReference type="Gene3D" id="3.30.565.10">
    <property type="entry name" value="Histidine kinase-like ATPase, C-terminal domain"/>
    <property type="match status" value="1"/>
</dbReference>
<dbReference type="Gene3D" id="3.30.1540.20">
    <property type="entry name" value="MutL, C-terminal domain, dimerisation subdomain"/>
    <property type="match status" value="1"/>
</dbReference>
<dbReference type="Gene3D" id="3.30.1370.100">
    <property type="entry name" value="MutL, C-terminal domain, regulatory subdomain"/>
    <property type="match status" value="1"/>
</dbReference>
<dbReference type="HAMAP" id="MF_00149">
    <property type="entry name" value="DNA_mis_repair"/>
    <property type="match status" value="1"/>
</dbReference>
<dbReference type="InterPro" id="IPR014762">
    <property type="entry name" value="DNA_mismatch_repair_CS"/>
</dbReference>
<dbReference type="InterPro" id="IPR020667">
    <property type="entry name" value="DNA_mismatch_repair_MutL"/>
</dbReference>
<dbReference type="InterPro" id="IPR013507">
    <property type="entry name" value="DNA_mismatch_S5_2-like"/>
</dbReference>
<dbReference type="InterPro" id="IPR036890">
    <property type="entry name" value="HATPase_C_sf"/>
</dbReference>
<dbReference type="InterPro" id="IPR002099">
    <property type="entry name" value="MutL/Mlh/PMS"/>
</dbReference>
<dbReference type="InterPro" id="IPR038973">
    <property type="entry name" value="MutL/Mlh/Pms-like"/>
</dbReference>
<dbReference type="InterPro" id="IPR014790">
    <property type="entry name" value="MutL_C"/>
</dbReference>
<dbReference type="InterPro" id="IPR042120">
    <property type="entry name" value="MutL_C_dimsub"/>
</dbReference>
<dbReference type="InterPro" id="IPR042121">
    <property type="entry name" value="MutL_C_regsub"/>
</dbReference>
<dbReference type="InterPro" id="IPR037198">
    <property type="entry name" value="MutL_C_sf"/>
</dbReference>
<dbReference type="InterPro" id="IPR020568">
    <property type="entry name" value="Ribosomal_Su5_D2-typ_SF"/>
</dbReference>
<dbReference type="InterPro" id="IPR014721">
    <property type="entry name" value="Ribsml_uS5_D2-typ_fold_subgr"/>
</dbReference>
<dbReference type="NCBIfam" id="TIGR00585">
    <property type="entry name" value="mutl"/>
    <property type="match status" value="1"/>
</dbReference>
<dbReference type="PANTHER" id="PTHR10073">
    <property type="entry name" value="DNA MISMATCH REPAIR PROTEIN MLH, PMS, MUTL"/>
    <property type="match status" value="1"/>
</dbReference>
<dbReference type="PANTHER" id="PTHR10073:SF12">
    <property type="entry name" value="DNA MISMATCH REPAIR PROTEIN MLH1"/>
    <property type="match status" value="1"/>
</dbReference>
<dbReference type="Pfam" id="PF01119">
    <property type="entry name" value="DNA_mis_repair"/>
    <property type="match status" value="1"/>
</dbReference>
<dbReference type="Pfam" id="PF13589">
    <property type="entry name" value="HATPase_c_3"/>
    <property type="match status" value="1"/>
</dbReference>
<dbReference type="Pfam" id="PF08676">
    <property type="entry name" value="MutL_C"/>
    <property type="match status" value="1"/>
</dbReference>
<dbReference type="SMART" id="SM01340">
    <property type="entry name" value="DNA_mis_repair"/>
    <property type="match status" value="1"/>
</dbReference>
<dbReference type="SMART" id="SM00853">
    <property type="entry name" value="MutL_C"/>
    <property type="match status" value="1"/>
</dbReference>
<dbReference type="SUPFAM" id="SSF55874">
    <property type="entry name" value="ATPase domain of HSP90 chaperone/DNA topoisomerase II/histidine kinase"/>
    <property type="match status" value="1"/>
</dbReference>
<dbReference type="SUPFAM" id="SSF118116">
    <property type="entry name" value="DNA mismatch repair protein MutL"/>
    <property type="match status" value="1"/>
</dbReference>
<dbReference type="SUPFAM" id="SSF54211">
    <property type="entry name" value="Ribosomal protein S5 domain 2-like"/>
    <property type="match status" value="1"/>
</dbReference>
<dbReference type="PROSITE" id="PS00058">
    <property type="entry name" value="DNA_MISMATCH_REPAIR_1"/>
    <property type="match status" value="1"/>
</dbReference>
<evidence type="ECO:0000250" key="1"/>
<evidence type="ECO:0000305" key="2"/>
<keyword id="KW-0227">DNA damage</keyword>
<keyword id="KW-0234">DNA repair</keyword>
<keyword id="KW-1185">Reference proteome</keyword>
<organism>
    <name type="scientific">Thermotoga maritima (strain ATCC 43589 / DSM 3109 / JCM 10099 / NBRC 100826 / MSB8)</name>
    <dbReference type="NCBI Taxonomy" id="243274"/>
    <lineage>
        <taxon>Bacteria</taxon>
        <taxon>Thermotogati</taxon>
        <taxon>Thermotogota</taxon>
        <taxon>Thermotogae</taxon>
        <taxon>Thermotogales</taxon>
        <taxon>Thermotogaceae</taxon>
        <taxon>Thermotoga</taxon>
    </lineage>
</organism>
<gene>
    <name type="primary">mutL</name>
    <name type="ordered locus">TM_0022</name>
</gene>
<name>MUTL_THEMA</name>
<reference key="1">
    <citation type="submission" date="1996-09" db="EMBL/GenBank/DDBJ databases">
        <title>Expression and characterization of MutL proteins from thermophilic eubacteria.</title>
        <authorList>
            <person name="Wetmur J.G."/>
            <person name="Rosenfeld A."/>
            <person name="Wong D.M."/>
        </authorList>
    </citation>
    <scope>NUCLEOTIDE SEQUENCE [GENOMIC DNA]</scope>
</reference>
<reference key="2">
    <citation type="journal article" date="1999" name="Nature">
        <title>Evidence for lateral gene transfer between Archaea and Bacteria from genome sequence of Thermotoga maritima.</title>
        <authorList>
            <person name="Nelson K.E."/>
            <person name="Clayton R.A."/>
            <person name="Gill S.R."/>
            <person name="Gwinn M.L."/>
            <person name="Dodson R.J."/>
            <person name="Haft D.H."/>
            <person name="Hickey E.K."/>
            <person name="Peterson J.D."/>
            <person name="Nelson W.C."/>
            <person name="Ketchum K.A."/>
            <person name="McDonald L.A."/>
            <person name="Utterback T.R."/>
            <person name="Malek J.A."/>
            <person name="Linher K.D."/>
            <person name="Garrett M.M."/>
            <person name="Stewart A.M."/>
            <person name="Cotton M.D."/>
            <person name="Pratt M.S."/>
            <person name="Phillips C.A."/>
            <person name="Richardson D.L."/>
            <person name="Heidelberg J.F."/>
            <person name="Sutton G.G."/>
            <person name="Fleischmann R.D."/>
            <person name="Eisen J.A."/>
            <person name="White O."/>
            <person name="Salzberg S.L."/>
            <person name="Smith H.O."/>
            <person name="Venter J.C."/>
            <person name="Fraser C.M."/>
        </authorList>
    </citation>
    <scope>NUCLEOTIDE SEQUENCE [LARGE SCALE GENOMIC DNA]</scope>
    <source>
        <strain>ATCC 43589 / DSM 3109 / JCM 10099 / NBRC 100826 / MSB8</strain>
    </source>
</reference>
<proteinExistence type="inferred from homology"/>
<protein>
    <recommendedName>
        <fullName>DNA mismatch repair protein MutL</fullName>
    </recommendedName>
</protein>